<dbReference type="EC" id="3.5.3.4" evidence="1"/>
<dbReference type="EMBL" id="CP000863">
    <property type="protein sequence ID" value="ACC58863.1"/>
    <property type="molecule type" value="Genomic_DNA"/>
</dbReference>
<dbReference type="RefSeq" id="WP_000212399.1">
    <property type="nucleotide sequence ID" value="NZ_CP031380.1"/>
</dbReference>
<dbReference type="SMR" id="B2I1L5"/>
<dbReference type="KEGG" id="abc:ACICU_03554"/>
<dbReference type="HOGENOM" id="CLU_038797_1_2_6"/>
<dbReference type="UniPathway" id="UPA00395">
    <property type="reaction ID" value="UER00654"/>
</dbReference>
<dbReference type="Proteomes" id="UP000008839">
    <property type="component" value="Chromosome"/>
</dbReference>
<dbReference type="GO" id="GO:0004037">
    <property type="term" value="F:allantoicase activity"/>
    <property type="evidence" value="ECO:0007669"/>
    <property type="project" value="UniProtKB-UniRule"/>
</dbReference>
<dbReference type="GO" id="GO:0000256">
    <property type="term" value="P:allantoin catabolic process"/>
    <property type="evidence" value="ECO:0007669"/>
    <property type="project" value="UniProtKB-UniRule"/>
</dbReference>
<dbReference type="GO" id="GO:0006144">
    <property type="term" value="P:purine nucleobase metabolic process"/>
    <property type="evidence" value="ECO:0007669"/>
    <property type="project" value="UniProtKB-KW"/>
</dbReference>
<dbReference type="Gene3D" id="2.60.120.260">
    <property type="entry name" value="Galactose-binding domain-like"/>
    <property type="match status" value="2"/>
</dbReference>
<dbReference type="HAMAP" id="MF_00813">
    <property type="entry name" value="Allantoicase"/>
    <property type="match status" value="1"/>
</dbReference>
<dbReference type="InterPro" id="IPR005164">
    <property type="entry name" value="Allantoicase"/>
</dbReference>
<dbReference type="InterPro" id="IPR015908">
    <property type="entry name" value="Allantoicase_dom"/>
</dbReference>
<dbReference type="InterPro" id="IPR008979">
    <property type="entry name" value="Galactose-bd-like_sf"/>
</dbReference>
<dbReference type="NCBIfam" id="TIGR02961">
    <property type="entry name" value="allantoicase"/>
    <property type="match status" value="1"/>
</dbReference>
<dbReference type="PANTHER" id="PTHR12045">
    <property type="entry name" value="ALLANTOICASE"/>
    <property type="match status" value="1"/>
</dbReference>
<dbReference type="PANTHER" id="PTHR12045:SF3">
    <property type="entry name" value="INACTIVE ALLANTOICASE-RELATED"/>
    <property type="match status" value="1"/>
</dbReference>
<dbReference type="Pfam" id="PF03561">
    <property type="entry name" value="Allantoicase"/>
    <property type="match status" value="2"/>
</dbReference>
<dbReference type="PIRSF" id="PIRSF016516">
    <property type="entry name" value="Allantoicase"/>
    <property type="match status" value="1"/>
</dbReference>
<dbReference type="SUPFAM" id="SSF49785">
    <property type="entry name" value="Galactose-binding domain-like"/>
    <property type="match status" value="2"/>
</dbReference>
<gene>
    <name evidence="1" type="primary">alc</name>
    <name type="ordered locus">ACICU_03554</name>
</gene>
<organism>
    <name type="scientific">Acinetobacter baumannii (strain ACICU)</name>
    <dbReference type="NCBI Taxonomy" id="405416"/>
    <lineage>
        <taxon>Bacteria</taxon>
        <taxon>Pseudomonadati</taxon>
        <taxon>Pseudomonadota</taxon>
        <taxon>Gammaproteobacteria</taxon>
        <taxon>Moraxellales</taxon>
        <taxon>Moraxellaceae</taxon>
        <taxon>Acinetobacter</taxon>
        <taxon>Acinetobacter calcoaceticus/baumannii complex</taxon>
    </lineage>
</organism>
<comment type="catalytic activity">
    <reaction evidence="1">
        <text>allantoate + H2O = (S)-ureidoglycolate + urea</text>
        <dbReference type="Rhea" id="RHEA:11016"/>
        <dbReference type="ChEBI" id="CHEBI:15377"/>
        <dbReference type="ChEBI" id="CHEBI:16199"/>
        <dbReference type="ChEBI" id="CHEBI:17536"/>
        <dbReference type="ChEBI" id="CHEBI:57296"/>
        <dbReference type="EC" id="3.5.3.4"/>
    </reaction>
</comment>
<comment type="pathway">
    <text evidence="1">Nitrogen metabolism; (S)-allantoin degradation; (S)-ureidoglycolate from allantoate (aminidohydrolase route): step 1/1.</text>
</comment>
<comment type="similarity">
    <text evidence="1">Belongs to the allantoicase family.</text>
</comment>
<name>ALLC_ACIBC</name>
<keyword id="KW-0378">Hydrolase</keyword>
<keyword id="KW-0659">Purine metabolism</keyword>
<sequence length="336" mass="37847">MATLHAPAFELPEILNTKTNLADARIGAQVIECSDDFFAEAKRMLQFEAPIFVEDKFDDHGKWMDGWESRRKRHAGYDWCIVKLGVSGKISALDIDTTFFTGNYPASASLEACYAPNGDLTGVTWQSILENTELGPSQHHIFMVNNDAIFTHIRLNIFPDGGIARLRVYGDVHIQVTDHEQTLDLLALENGGRVIAYSDAHFGHPRNLINPGRGVNMGDGWETKRRRAPGYDWCILALGKSGKIEKIEIDTAHFKGNFPAEVSIQAVYLENATDAQLIPQSMFWSYLLEAQPMQMDHIHEYMNEILQHEKVSHIRINMIPDGGISRVRLWGKIAKS</sequence>
<reference key="1">
    <citation type="journal article" date="2008" name="Antimicrob. Agents Chemother.">
        <title>Whole-genome pyrosequencing of an epidemic multidrug-resistant Acinetobacter baumannii strain belonging to the European clone II group.</title>
        <authorList>
            <person name="Iacono M."/>
            <person name="Villa L."/>
            <person name="Fortini D."/>
            <person name="Bordoni R."/>
            <person name="Imperi F."/>
            <person name="Bonnal R.J."/>
            <person name="Sicheritz-Ponten T."/>
            <person name="De Bellis G."/>
            <person name="Visca P."/>
            <person name="Cassone A."/>
            <person name="Carattoli A."/>
        </authorList>
    </citation>
    <scope>NUCLEOTIDE SEQUENCE [LARGE SCALE GENOMIC DNA]</scope>
    <source>
        <strain>ACICU</strain>
    </source>
</reference>
<accession>B2I1L5</accession>
<protein>
    <recommendedName>
        <fullName evidence="1">Probable allantoicase</fullName>
        <ecNumber evidence="1">3.5.3.4</ecNumber>
    </recommendedName>
    <alternativeName>
        <fullName evidence="1">Allantoate amidinohydrolase</fullName>
    </alternativeName>
</protein>
<proteinExistence type="inferred from homology"/>
<feature type="chain" id="PRO_1000134086" description="Probable allantoicase">
    <location>
        <begin position="1"/>
        <end position="336"/>
    </location>
</feature>
<evidence type="ECO:0000255" key="1">
    <source>
        <dbReference type="HAMAP-Rule" id="MF_00813"/>
    </source>
</evidence>